<feature type="chain" id="PRO_0000282475" description="DEAD-box ATP-dependent RNA helicase 9">
    <location>
        <begin position="1"/>
        <end position="628"/>
    </location>
</feature>
<feature type="domain" description="Helicase ATP-binding" evidence="1">
    <location>
        <begin position="129"/>
        <end position="302"/>
    </location>
</feature>
<feature type="domain" description="Helicase C-terminal" evidence="2">
    <location>
        <begin position="331"/>
        <end position="478"/>
    </location>
</feature>
<feature type="region of interest" description="Disordered" evidence="3">
    <location>
        <begin position="496"/>
        <end position="548"/>
    </location>
</feature>
<feature type="region of interest" description="Disordered" evidence="3">
    <location>
        <begin position="571"/>
        <end position="628"/>
    </location>
</feature>
<feature type="short sequence motif" description="Q motif">
    <location>
        <begin position="98"/>
        <end position="126"/>
    </location>
</feature>
<feature type="short sequence motif" description="DEAD box">
    <location>
        <begin position="250"/>
        <end position="253"/>
    </location>
</feature>
<feature type="compositionally biased region" description="Low complexity" evidence="3">
    <location>
        <begin position="500"/>
        <end position="509"/>
    </location>
</feature>
<feature type="compositionally biased region" description="Gly residues" evidence="3">
    <location>
        <begin position="510"/>
        <end position="548"/>
    </location>
</feature>
<feature type="binding site" evidence="1">
    <location>
        <begin position="142"/>
        <end position="149"/>
    </location>
    <ligand>
        <name>ATP</name>
        <dbReference type="ChEBI" id="CHEBI:30616"/>
    </ligand>
</feature>
<organism>
    <name type="scientific">Oryza sativa subsp. japonica</name>
    <name type="common">Rice</name>
    <dbReference type="NCBI Taxonomy" id="39947"/>
    <lineage>
        <taxon>Eukaryota</taxon>
        <taxon>Viridiplantae</taxon>
        <taxon>Streptophyta</taxon>
        <taxon>Embryophyta</taxon>
        <taxon>Tracheophyta</taxon>
        <taxon>Spermatophyta</taxon>
        <taxon>Magnoliopsida</taxon>
        <taxon>Liliopsida</taxon>
        <taxon>Poales</taxon>
        <taxon>Poaceae</taxon>
        <taxon>BOP clade</taxon>
        <taxon>Oryzoideae</taxon>
        <taxon>Oryzeae</taxon>
        <taxon>Oryzinae</taxon>
        <taxon>Oryza</taxon>
        <taxon>Oryza sativa</taxon>
    </lineage>
</organism>
<evidence type="ECO:0000255" key="1">
    <source>
        <dbReference type="PROSITE-ProRule" id="PRU00541"/>
    </source>
</evidence>
<evidence type="ECO:0000255" key="2">
    <source>
        <dbReference type="PROSITE-ProRule" id="PRU00542"/>
    </source>
</evidence>
<evidence type="ECO:0000256" key="3">
    <source>
        <dbReference type="SAM" id="MobiDB-lite"/>
    </source>
</evidence>
<evidence type="ECO:0000305" key="4"/>
<proteinExistence type="evidence at transcript level"/>
<gene>
    <name type="ordered locus">Os12g0611200</name>
    <name type="ordered locus">LOC_Os12g41715</name>
</gene>
<keyword id="KW-0067">ATP-binding</keyword>
<keyword id="KW-0347">Helicase</keyword>
<keyword id="KW-0378">Hydrolase</keyword>
<keyword id="KW-0547">Nucleotide-binding</keyword>
<keyword id="KW-1185">Reference proteome</keyword>
<keyword id="KW-0694">RNA-binding</keyword>
<sequence>MYSILRRAAPLRRRAVSALAAAVLRREEAAAEVVVSRRATIPAAWFHSSPAWLGFRETGAAGAAARPQYAADEGLFYEEDKRGAKAGGVAAGGAEEGLEVAKLGISPKIVSQLASRGITKLFPIQRAVLEPAMQGKDMVGRAKTGTGKTLAFGIPILDAIIRHNEKNSPGKFPLAIVLAPTRELAKQVEREFSDSSNVETICVYGGTPISQQIRQLNYGVDVVIGTPGRVIDLLKRGALNLSEVRFVVLDEADQMLSVGFDEDVETILDRVPPKRQTLMFSATMPTWIQRLTQKYLKNPVTIDLVGEDDQKLAEGISLYSIASEGHAKPAVLGELIKEHAKGGKCIVFTQTKRDADRLSYTMGRSFQCQALHGDITQAQRERTLKGFREGHFNILIATDVAARGLDIPNVDLVIHFELPNSSELFVHRSGRTGRAGKKGKAIVMHSYQQSRAIRMVENDVGCKFTELPKINVEGSDLMSGGFDSFGGGGFGREGGGSYGRRGSFGSSSSRGGGFGDSGFGRSGGGFGRSGGGGFGRSSGGGFGDSGFGRSGGGGFGDSGFGRSGGGGYGDSGFGSSGGGSGRSGFGRSGGFGDSGSGRFGGGFGNSGSGSFGNFGGNNSGQSGGFGSS</sequence>
<accession>Q0ILZ4</accession>
<accession>A0A0P0YBZ7</accession>
<reference key="1">
    <citation type="journal article" date="2005" name="Nature">
        <title>The map-based sequence of the rice genome.</title>
        <authorList>
            <consortium name="International rice genome sequencing project (IRGSP)"/>
        </authorList>
    </citation>
    <scope>NUCLEOTIDE SEQUENCE [LARGE SCALE GENOMIC DNA]</scope>
    <source>
        <strain>cv. Nipponbare</strain>
    </source>
</reference>
<reference key="2">
    <citation type="journal article" date="2008" name="Nucleic Acids Res.">
        <title>The rice annotation project database (RAP-DB): 2008 update.</title>
        <authorList>
            <consortium name="The rice annotation project (RAP)"/>
        </authorList>
    </citation>
    <scope>GENOME REANNOTATION</scope>
    <source>
        <strain>cv. Nipponbare</strain>
    </source>
</reference>
<reference key="3">
    <citation type="journal article" date="2013" name="Rice">
        <title>Improvement of the Oryza sativa Nipponbare reference genome using next generation sequence and optical map data.</title>
        <authorList>
            <person name="Kawahara Y."/>
            <person name="de la Bastide M."/>
            <person name="Hamilton J.P."/>
            <person name="Kanamori H."/>
            <person name="McCombie W.R."/>
            <person name="Ouyang S."/>
            <person name="Schwartz D.C."/>
            <person name="Tanaka T."/>
            <person name="Wu J."/>
            <person name="Zhou S."/>
            <person name="Childs K.L."/>
            <person name="Davidson R.M."/>
            <person name="Lin H."/>
            <person name="Quesada-Ocampo L."/>
            <person name="Vaillancourt B."/>
            <person name="Sakai H."/>
            <person name="Lee S.S."/>
            <person name="Kim J."/>
            <person name="Numa H."/>
            <person name="Itoh T."/>
            <person name="Buell C.R."/>
            <person name="Matsumoto T."/>
        </authorList>
    </citation>
    <scope>GENOME REANNOTATION</scope>
    <source>
        <strain>cv. Nipponbare</strain>
    </source>
</reference>
<reference key="4">
    <citation type="submission" date="2007-09" db="EMBL/GenBank/DDBJ databases">
        <title>Oryza sativa full length cDNA.</title>
        <authorList>
            <consortium name="The rice full-length cDNA consortium"/>
        </authorList>
    </citation>
    <scope>NUCLEOTIDE SEQUENCE [LARGE SCALE MRNA]</scope>
    <source>
        <strain>cv. Nipponbare</strain>
    </source>
</reference>
<comment type="catalytic activity">
    <reaction>
        <text>ATP + H2O = ADP + phosphate + H(+)</text>
        <dbReference type="Rhea" id="RHEA:13065"/>
        <dbReference type="ChEBI" id="CHEBI:15377"/>
        <dbReference type="ChEBI" id="CHEBI:15378"/>
        <dbReference type="ChEBI" id="CHEBI:30616"/>
        <dbReference type="ChEBI" id="CHEBI:43474"/>
        <dbReference type="ChEBI" id="CHEBI:456216"/>
        <dbReference type="EC" id="3.6.4.13"/>
    </reaction>
</comment>
<comment type="domain">
    <text>The Q motif is unique to and characteristic of the DEAD box family of RNA helicases and controls ATP binding and hydrolysis.</text>
</comment>
<comment type="similarity">
    <text evidence="4">Belongs to the DEAD box helicase family. DDX21/DDX50 subfamily.</text>
</comment>
<comment type="sequence caution" evidence="4">
    <conflict type="erroneous gene model prediction">
        <sequence resource="EMBL-CDS" id="BAF30271"/>
    </conflict>
</comment>
<name>RH9_ORYSJ</name>
<dbReference type="EC" id="3.6.4.13"/>
<dbReference type="EMBL" id="AP008218">
    <property type="protein sequence ID" value="BAF30271.2"/>
    <property type="status" value="ALT_SEQ"/>
    <property type="molecule type" value="Genomic_DNA"/>
</dbReference>
<dbReference type="EMBL" id="AP014968">
    <property type="protein sequence ID" value="BAT18038.1"/>
    <property type="molecule type" value="Genomic_DNA"/>
</dbReference>
<dbReference type="EMBL" id="AK287833">
    <property type="status" value="NOT_ANNOTATED_CDS"/>
    <property type="molecule type" value="mRNA"/>
</dbReference>
<dbReference type="RefSeq" id="XP_015620393.1">
    <property type="nucleotide sequence ID" value="XM_015764907.1"/>
</dbReference>
<dbReference type="SMR" id="Q0ILZ4"/>
<dbReference type="FunCoup" id="Q0ILZ4">
    <property type="interactions" value="5"/>
</dbReference>
<dbReference type="STRING" id="39947.Q0ILZ4"/>
<dbReference type="PaxDb" id="39947-Q0ILZ4"/>
<dbReference type="EnsemblPlants" id="Os12t0611200-01">
    <property type="protein sequence ID" value="Os12t0611200-01"/>
    <property type="gene ID" value="Os12g0611200"/>
</dbReference>
<dbReference type="Gramene" id="Os12t0611200-01">
    <property type="protein sequence ID" value="Os12t0611200-01"/>
    <property type="gene ID" value="Os12g0611200"/>
</dbReference>
<dbReference type="KEGG" id="dosa:Os12g0611200"/>
<dbReference type="eggNOG" id="KOG0331">
    <property type="taxonomic scope" value="Eukaryota"/>
</dbReference>
<dbReference type="HOGENOM" id="CLU_003041_29_2_1"/>
<dbReference type="InParanoid" id="Q0ILZ4"/>
<dbReference type="OMA" id="IAMYNYR"/>
<dbReference type="OrthoDB" id="4255at2759"/>
<dbReference type="Proteomes" id="UP000000763">
    <property type="component" value="Chromosome 12"/>
</dbReference>
<dbReference type="Proteomes" id="UP000059680">
    <property type="component" value="Chromosome 12"/>
</dbReference>
<dbReference type="GO" id="GO:0005737">
    <property type="term" value="C:cytoplasm"/>
    <property type="evidence" value="ECO:0000318"/>
    <property type="project" value="GO_Central"/>
</dbReference>
<dbReference type="GO" id="GO:0005524">
    <property type="term" value="F:ATP binding"/>
    <property type="evidence" value="ECO:0007669"/>
    <property type="project" value="UniProtKB-KW"/>
</dbReference>
<dbReference type="GO" id="GO:0016887">
    <property type="term" value="F:ATP hydrolysis activity"/>
    <property type="evidence" value="ECO:0007669"/>
    <property type="project" value="RHEA"/>
</dbReference>
<dbReference type="GO" id="GO:0003723">
    <property type="term" value="F:RNA binding"/>
    <property type="evidence" value="ECO:0007669"/>
    <property type="project" value="UniProtKB-KW"/>
</dbReference>
<dbReference type="GO" id="GO:0003724">
    <property type="term" value="F:RNA helicase activity"/>
    <property type="evidence" value="ECO:0007669"/>
    <property type="project" value="UniProtKB-EC"/>
</dbReference>
<dbReference type="GO" id="GO:0000373">
    <property type="term" value="P:Group II intron splicing"/>
    <property type="evidence" value="ECO:0000318"/>
    <property type="project" value="GO_Central"/>
</dbReference>
<dbReference type="CDD" id="cd00268">
    <property type="entry name" value="DEADc"/>
    <property type="match status" value="1"/>
</dbReference>
<dbReference type="CDD" id="cd18787">
    <property type="entry name" value="SF2_C_DEAD"/>
    <property type="match status" value="1"/>
</dbReference>
<dbReference type="Gene3D" id="3.40.50.300">
    <property type="entry name" value="P-loop containing nucleotide triphosphate hydrolases"/>
    <property type="match status" value="2"/>
</dbReference>
<dbReference type="InterPro" id="IPR011545">
    <property type="entry name" value="DEAD/DEAH_box_helicase_dom"/>
</dbReference>
<dbReference type="InterPro" id="IPR050079">
    <property type="entry name" value="DEAD_box_RNA_helicase"/>
</dbReference>
<dbReference type="InterPro" id="IPR014001">
    <property type="entry name" value="Helicase_ATP-bd"/>
</dbReference>
<dbReference type="InterPro" id="IPR001650">
    <property type="entry name" value="Helicase_C-like"/>
</dbReference>
<dbReference type="InterPro" id="IPR027417">
    <property type="entry name" value="P-loop_NTPase"/>
</dbReference>
<dbReference type="PANTHER" id="PTHR47959">
    <property type="entry name" value="ATP-DEPENDENT RNA HELICASE RHLE-RELATED"/>
    <property type="match status" value="1"/>
</dbReference>
<dbReference type="PANTHER" id="PTHR47959:SF23">
    <property type="entry name" value="HELICASE ATP-BINDING DOMAIN-CONTAINING PROTEIN"/>
    <property type="match status" value="1"/>
</dbReference>
<dbReference type="Pfam" id="PF00270">
    <property type="entry name" value="DEAD"/>
    <property type="match status" value="1"/>
</dbReference>
<dbReference type="Pfam" id="PF00271">
    <property type="entry name" value="Helicase_C"/>
    <property type="match status" value="1"/>
</dbReference>
<dbReference type="SMART" id="SM00487">
    <property type="entry name" value="DEXDc"/>
    <property type="match status" value="1"/>
</dbReference>
<dbReference type="SMART" id="SM00490">
    <property type="entry name" value="HELICc"/>
    <property type="match status" value="1"/>
</dbReference>
<dbReference type="SUPFAM" id="SSF52540">
    <property type="entry name" value="P-loop containing nucleoside triphosphate hydrolases"/>
    <property type="match status" value="1"/>
</dbReference>
<dbReference type="PROSITE" id="PS51192">
    <property type="entry name" value="HELICASE_ATP_BIND_1"/>
    <property type="match status" value="1"/>
</dbReference>
<dbReference type="PROSITE" id="PS51194">
    <property type="entry name" value="HELICASE_CTER"/>
    <property type="match status" value="1"/>
</dbReference>
<dbReference type="PROSITE" id="PS51195">
    <property type="entry name" value="Q_MOTIF"/>
    <property type="match status" value="1"/>
</dbReference>
<protein>
    <recommendedName>
        <fullName>DEAD-box ATP-dependent RNA helicase 9</fullName>
        <ecNumber>3.6.4.13</ecNumber>
    </recommendedName>
</protein>